<evidence type="ECO:0000255" key="1">
    <source>
        <dbReference type="HAMAP-Rule" id="MF_00178"/>
    </source>
</evidence>
<name>RISB_BEII9</name>
<proteinExistence type="inferred from homology"/>
<dbReference type="EC" id="2.5.1.78" evidence="1"/>
<dbReference type="EMBL" id="CP001016">
    <property type="protein sequence ID" value="ACB93862.1"/>
    <property type="molecule type" value="Genomic_DNA"/>
</dbReference>
<dbReference type="RefSeq" id="WP_012383220.1">
    <property type="nucleotide sequence ID" value="NC_010581.1"/>
</dbReference>
<dbReference type="SMR" id="B2ICH3"/>
<dbReference type="STRING" id="395963.Bind_0206"/>
<dbReference type="KEGG" id="bid:Bind_0206"/>
<dbReference type="eggNOG" id="COG0054">
    <property type="taxonomic scope" value="Bacteria"/>
</dbReference>
<dbReference type="HOGENOM" id="CLU_089358_1_2_5"/>
<dbReference type="OrthoDB" id="9809709at2"/>
<dbReference type="UniPathway" id="UPA00275">
    <property type="reaction ID" value="UER00404"/>
</dbReference>
<dbReference type="Proteomes" id="UP000001695">
    <property type="component" value="Chromosome"/>
</dbReference>
<dbReference type="GO" id="GO:0005829">
    <property type="term" value="C:cytosol"/>
    <property type="evidence" value="ECO:0007669"/>
    <property type="project" value="TreeGrafter"/>
</dbReference>
<dbReference type="GO" id="GO:0009349">
    <property type="term" value="C:riboflavin synthase complex"/>
    <property type="evidence" value="ECO:0007669"/>
    <property type="project" value="InterPro"/>
</dbReference>
<dbReference type="GO" id="GO:0000906">
    <property type="term" value="F:6,7-dimethyl-8-ribityllumazine synthase activity"/>
    <property type="evidence" value="ECO:0007669"/>
    <property type="project" value="UniProtKB-UniRule"/>
</dbReference>
<dbReference type="GO" id="GO:0009231">
    <property type="term" value="P:riboflavin biosynthetic process"/>
    <property type="evidence" value="ECO:0007669"/>
    <property type="project" value="UniProtKB-UniRule"/>
</dbReference>
<dbReference type="CDD" id="cd09209">
    <property type="entry name" value="Lumazine_synthase-I"/>
    <property type="match status" value="1"/>
</dbReference>
<dbReference type="Gene3D" id="3.40.50.960">
    <property type="entry name" value="Lumazine/riboflavin synthase"/>
    <property type="match status" value="1"/>
</dbReference>
<dbReference type="HAMAP" id="MF_00178">
    <property type="entry name" value="Lumazine_synth"/>
    <property type="match status" value="1"/>
</dbReference>
<dbReference type="InterPro" id="IPR034964">
    <property type="entry name" value="LS"/>
</dbReference>
<dbReference type="InterPro" id="IPR002180">
    <property type="entry name" value="LS/RS"/>
</dbReference>
<dbReference type="InterPro" id="IPR036467">
    <property type="entry name" value="LS/RS_sf"/>
</dbReference>
<dbReference type="NCBIfam" id="TIGR00114">
    <property type="entry name" value="lumazine-synth"/>
    <property type="match status" value="1"/>
</dbReference>
<dbReference type="PANTHER" id="PTHR21058:SF0">
    <property type="entry name" value="6,7-DIMETHYL-8-RIBITYLLUMAZINE SYNTHASE"/>
    <property type="match status" value="1"/>
</dbReference>
<dbReference type="PANTHER" id="PTHR21058">
    <property type="entry name" value="6,7-DIMETHYL-8-RIBITYLLUMAZINE SYNTHASE DMRL SYNTHASE LUMAZINE SYNTHASE"/>
    <property type="match status" value="1"/>
</dbReference>
<dbReference type="Pfam" id="PF00885">
    <property type="entry name" value="DMRL_synthase"/>
    <property type="match status" value="1"/>
</dbReference>
<dbReference type="SUPFAM" id="SSF52121">
    <property type="entry name" value="Lumazine synthase"/>
    <property type="match status" value="1"/>
</dbReference>
<protein>
    <recommendedName>
        <fullName evidence="1">6,7-dimethyl-8-ribityllumazine synthase</fullName>
        <shortName evidence="1">DMRL synthase</shortName>
        <shortName evidence="1">LS</shortName>
        <shortName evidence="1">Lumazine synthase</shortName>
        <ecNumber evidence="1">2.5.1.78</ecNumber>
    </recommendedName>
</protein>
<sequence length="181" mass="19408">MAEPRRALAQMDDARISVGNARFLIIEAPYYEDIAAQLRAGAEAALTRAQARFDVVSVPGALEIPIALAIALDRAPALYQGAIALGCIIRGETYHFEIVANESARALTQLVVERKLPFGNGILTVETETQALERASVESGDKGGDAARAALALYRFSQEFGQVVEQAQIQAQRPVLTSGAR</sequence>
<accession>B2ICH3</accession>
<reference key="1">
    <citation type="journal article" date="2010" name="J. Bacteriol.">
        <title>Complete genome sequence of Beijerinckia indica subsp. indica.</title>
        <authorList>
            <person name="Tamas I."/>
            <person name="Dedysh S.N."/>
            <person name="Liesack W."/>
            <person name="Stott M.B."/>
            <person name="Alam M."/>
            <person name="Murrell J.C."/>
            <person name="Dunfield P.F."/>
        </authorList>
    </citation>
    <scope>NUCLEOTIDE SEQUENCE [LARGE SCALE GENOMIC DNA]</scope>
    <source>
        <strain>ATCC 9039 / DSM 1715 / NCIMB 8712</strain>
    </source>
</reference>
<feature type="chain" id="PRO_1000195463" description="6,7-dimethyl-8-ribityllumazine synthase">
    <location>
        <begin position="1"/>
        <end position="181"/>
    </location>
</feature>
<feature type="active site" description="Proton donor" evidence="1">
    <location>
        <position position="95"/>
    </location>
</feature>
<feature type="binding site" evidence="1">
    <location>
        <position position="30"/>
    </location>
    <ligand>
        <name>5-amino-6-(D-ribitylamino)uracil</name>
        <dbReference type="ChEBI" id="CHEBI:15934"/>
    </ligand>
</feature>
<feature type="binding site" evidence="1">
    <location>
        <begin position="61"/>
        <end position="63"/>
    </location>
    <ligand>
        <name>5-amino-6-(D-ribitylamino)uracil</name>
        <dbReference type="ChEBI" id="CHEBI:15934"/>
    </ligand>
</feature>
<feature type="binding site" evidence="1">
    <location>
        <begin position="87"/>
        <end position="89"/>
    </location>
    <ligand>
        <name>5-amino-6-(D-ribitylamino)uracil</name>
        <dbReference type="ChEBI" id="CHEBI:15934"/>
    </ligand>
</feature>
<feature type="binding site" evidence="1">
    <location>
        <begin position="92"/>
        <end position="93"/>
    </location>
    <ligand>
        <name>(2S)-2-hydroxy-3-oxobutyl phosphate</name>
        <dbReference type="ChEBI" id="CHEBI:58830"/>
    </ligand>
</feature>
<feature type="binding site" evidence="1">
    <location>
        <position position="120"/>
    </location>
    <ligand>
        <name>5-amino-6-(D-ribitylamino)uracil</name>
        <dbReference type="ChEBI" id="CHEBI:15934"/>
    </ligand>
</feature>
<feature type="binding site" evidence="1">
    <location>
        <position position="134"/>
    </location>
    <ligand>
        <name>(2S)-2-hydroxy-3-oxobutyl phosphate</name>
        <dbReference type="ChEBI" id="CHEBI:58830"/>
    </ligand>
</feature>
<organism>
    <name type="scientific">Beijerinckia indica subsp. indica (strain ATCC 9039 / DSM 1715 / NCIMB 8712)</name>
    <dbReference type="NCBI Taxonomy" id="395963"/>
    <lineage>
        <taxon>Bacteria</taxon>
        <taxon>Pseudomonadati</taxon>
        <taxon>Pseudomonadota</taxon>
        <taxon>Alphaproteobacteria</taxon>
        <taxon>Hyphomicrobiales</taxon>
        <taxon>Beijerinckiaceae</taxon>
        <taxon>Beijerinckia</taxon>
    </lineage>
</organism>
<comment type="function">
    <text evidence="1">Catalyzes the formation of 6,7-dimethyl-8-ribityllumazine by condensation of 5-amino-6-(D-ribitylamino)uracil with 3,4-dihydroxy-2-butanone 4-phosphate. This is the penultimate step in the biosynthesis of riboflavin.</text>
</comment>
<comment type="catalytic activity">
    <reaction evidence="1">
        <text>(2S)-2-hydroxy-3-oxobutyl phosphate + 5-amino-6-(D-ribitylamino)uracil = 6,7-dimethyl-8-(1-D-ribityl)lumazine + phosphate + 2 H2O + H(+)</text>
        <dbReference type="Rhea" id="RHEA:26152"/>
        <dbReference type="ChEBI" id="CHEBI:15377"/>
        <dbReference type="ChEBI" id="CHEBI:15378"/>
        <dbReference type="ChEBI" id="CHEBI:15934"/>
        <dbReference type="ChEBI" id="CHEBI:43474"/>
        <dbReference type="ChEBI" id="CHEBI:58201"/>
        <dbReference type="ChEBI" id="CHEBI:58830"/>
        <dbReference type="EC" id="2.5.1.78"/>
    </reaction>
</comment>
<comment type="pathway">
    <text evidence="1">Cofactor biosynthesis; riboflavin biosynthesis; riboflavin from 2-hydroxy-3-oxobutyl phosphate and 5-amino-6-(D-ribitylamino)uracil: step 1/2.</text>
</comment>
<comment type="similarity">
    <text evidence="1">Belongs to the DMRL synthase family.</text>
</comment>
<gene>
    <name evidence="1" type="primary">ribH</name>
    <name type="ordered locus">Bind_0206</name>
</gene>
<keyword id="KW-1185">Reference proteome</keyword>
<keyword id="KW-0686">Riboflavin biosynthesis</keyword>
<keyword id="KW-0808">Transferase</keyword>